<accession>Q9KTL4</accession>
<proteinExistence type="inferred from homology"/>
<sequence>MLEIVYQDEYLVAVNKPAGMLVHRSWLDKHETEFVMQTLRDQIGQHVFPLHRLDRPTSGVLVFALSSQIASEVMPMFANHEMEKTYHAIVRGWIEEANVLDYPLKEELDKIADKFAKQDKEAQSAVTAYRPLAKVELPIATGKFATTRYCLMEMQPKTGRKHQLRRHMAHLRHPIVGDTTHGDGVHNRLFREHFSAQRLMLHASELRFMHPYTQQPLVIRAGLDEVWQGLLSEFGWQESLLINA</sequence>
<protein>
    <recommendedName>
        <fullName>tRNA pseudouridine synthase C</fullName>
        <ecNumber>5.4.99.26</ecNumber>
    </recommendedName>
    <alternativeName>
        <fullName>tRNA pseudouridine(65) synthase</fullName>
    </alternativeName>
    <alternativeName>
        <fullName>tRNA pseudouridylate synthase C</fullName>
    </alternativeName>
    <alternativeName>
        <fullName>tRNA-uridine isomerase C</fullName>
    </alternativeName>
</protein>
<gene>
    <name type="primary">truC</name>
    <name type="ordered locus">VC_0888</name>
</gene>
<evidence type="ECO:0000250" key="1"/>
<evidence type="ECO:0000305" key="2"/>
<reference key="1">
    <citation type="journal article" date="2000" name="Nature">
        <title>DNA sequence of both chromosomes of the cholera pathogen Vibrio cholerae.</title>
        <authorList>
            <person name="Heidelberg J.F."/>
            <person name="Eisen J.A."/>
            <person name="Nelson W.C."/>
            <person name="Clayton R.A."/>
            <person name="Gwinn M.L."/>
            <person name="Dodson R.J."/>
            <person name="Haft D.H."/>
            <person name="Hickey E.K."/>
            <person name="Peterson J.D."/>
            <person name="Umayam L.A."/>
            <person name="Gill S.R."/>
            <person name="Nelson K.E."/>
            <person name="Read T.D."/>
            <person name="Tettelin H."/>
            <person name="Richardson D.L."/>
            <person name="Ermolaeva M.D."/>
            <person name="Vamathevan J.J."/>
            <person name="Bass S."/>
            <person name="Qin H."/>
            <person name="Dragoi I."/>
            <person name="Sellers P."/>
            <person name="McDonald L.A."/>
            <person name="Utterback T.R."/>
            <person name="Fleischmann R.D."/>
            <person name="Nierman W.C."/>
            <person name="White O."/>
            <person name="Salzberg S.L."/>
            <person name="Smith H.O."/>
            <person name="Colwell R.R."/>
            <person name="Mekalanos J.J."/>
            <person name="Venter J.C."/>
            <person name="Fraser C.M."/>
        </authorList>
    </citation>
    <scope>NUCLEOTIDE SEQUENCE [LARGE SCALE GENOMIC DNA]</scope>
    <source>
        <strain>ATCC 39315 / El Tor Inaba N16961</strain>
    </source>
</reference>
<dbReference type="EC" id="5.4.99.26"/>
<dbReference type="EMBL" id="AE003852">
    <property type="protein sequence ID" value="AAF94050.1"/>
    <property type="molecule type" value="Genomic_DNA"/>
</dbReference>
<dbReference type="PIR" id="G82266">
    <property type="entry name" value="G82266"/>
</dbReference>
<dbReference type="RefSeq" id="NP_230535.1">
    <property type="nucleotide sequence ID" value="NC_002505.1"/>
</dbReference>
<dbReference type="RefSeq" id="WP_000890132.1">
    <property type="nucleotide sequence ID" value="NZ_LT906614.1"/>
</dbReference>
<dbReference type="SMR" id="Q9KTL4"/>
<dbReference type="STRING" id="243277.VC_0888"/>
<dbReference type="DNASU" id="2614117"/>
<dbReference type="EnsemblBacteria" id="AAF94050">
    <property type="protein sequence ID" value="AAF94050"/>
    <property type="gene ID" value="VC_0888"/>
</dbReference>
<dbReference type="KEGG" id="vch:VC_0888"/>
<dbReference type="PATRIC" id="fig|243277.26.peg.845"/>
<dbReference type="eggNOG" id="COG0564">
    <property type="taxonomic scope" value="Bacteria"/>
</dbReference>
<dbReference type="HOGENOM" id="CLU_016902_11_4_6"/>
<dbReference type="Proteomes" id="UP000000584">
    <property type="component" value="Chromosome 1"/>
</dbReference>
<dbReference type="GO" id="GO:0009982">
    <property type="term" value="F:pseudouridine synthase activity"/>
    <property type="evidence" value="ECO:0000318"/>
    <property type="project" value="GO_Central"/>
</dbReference>
<dbReference type="GO" id="GO:0003723">
    <property type="term" value="F:RNA binding"/>
    <property type="evidence" value="ECO:0007669"/>
    <property type="project" value="InterPro"/>
</dbReference>
<dbReference type="GO" id="GO:0160149">
    <property type="term" value="F:tRNA pseudouridine(65) synthase activity"/>
    <property type="evidence" value="ECO:0007669"/>
    <property type="project" value="UniProtKB-EC"/>
</dbReference>
<dbReference type="GO" id="GO:0000455">
    <property type="term" value="P:enzyme-directed rRNA pseudouridine synthesis"/>
    <property type="evidence" value="ECO:0000318"/>
    <property type="project" value="GO_Central"/>
</dbReference>
<dbReference type="GO" id="GO:0008033">
    <property type="term" value="P:tRNA processing"/>
    <property type="evidence" value="ECO:0007669"/>
    <property type="project" value="UniProtKB-KW"/>
</dbReference>
<dbReference type="CDD" id="cd02563">
    <property type="entry name" value="PseudoU_synth_TruC"/>
    <property type="match status" value="1"/>
</dbReference>
<dbReference type="FunFam" id="3.30.2350.10:FF:000008">
    <property type="entry name" value="tRNA pseudouridine synthase C"/>
    <property type="match status" value="1"/>
</dbReference>
<dbReference type="Gene3D" id="3.30.2350.10">
    <property type="entry name" value="Pseudouridine synthase"/>
    <property type="match status" value="1"/>
</dbReference>
<dbReference type="InterPro" id="IPR020103">
    <property type="entry name" value="PsdUridine_synth_cat_dom_sf"/>
</dbReference>
<dbReference type="InterPro" id="IPR006224">
    <property type="entry name" value="PsdUridine_synth_RluA-like_CS"/>
</dbReference>
<dbReference type="InterPro" id="IPR006145">
    <property type="entry name" value="PsdUridine_synth_RsuA/RluA"/>
</dbReference>
<dbReference type="InterPro" id="IPR050188">
    <property type="entry name" value="RluA_PseudoU_synthase"/>
</dbReference>
<dbReference type="NCBIfam" id="NF008321">
    <property type="entry name" value="PRK11112.1"/>
    <property type="match status" value="1"/>
</dbReference>
<dbReference type="PANTHER" id="PTHR21600">
    <property type="entry name" value="MITOCHONDRIAL RNA PSEUDOURIDINE SYNTHASE"/>
    <property type="match status" value="1"/>
</dbReference>
<dbReference type="PANTHER" id="PTHR21600:SF56">
    <property type="entry name" value="TRNA PSEUDOURIDINE SYNTHASE C"/>
    <property type="match status" value="1"/>
</dbReference>
<dbReference type="Pfam" id="PF00849">
    <property type="entry name" value="PseudoU_synth_2"/>
    <property type="match status" value="1"/>
</dbReference>
<dbReference type="SUPFAM" id="SSF55120">
    <property type="entry name" value="Pseudouridine synthase"/>
    <property type="match status" value="1"/>
</dbReference>
<dbReference type="PROSITE" id="PS01129">
    <property type="entry name" value="PSI_RLU"/>
    <property type="match status" value="1"/>
</dbReference>
<name>TRUC_VIBCH</name>
<organism>
    <name type="scientific">Vibrio cholerae serotype O1 (strain ATCC 39315 / El Tor Inaba N16961)</name>
    <dbReference type="NCBI Taxonomy" id="243277"/>
    <lineage>
        <taxon>Bacteria</taxon>
        <taxon>Pseudomonadati</taxon>
        <taxon>Pseudomonadota</taxon>
        <taxon>Gammaproteobacteria</taxon>
        <taxon>Vibrionales</taxon>
        <taxon>Vibrionaceae</taxon>
        <taxon>Vibrio</taxon>
    </lineage>
</organism>
<keyword id="KW-0413">Isomerase</keyword>
<keyword id="KW-1185">Reference proteome</keyword>
<keyword id="KW-0819">tRNA processing</keyword>
<comment type="function">
    <text evidence="1">Responsible for synthesis of pseudouridine from uracil-65 in transfer RNAs.</text>
</comment>
<comment type="catalytic activity">
    <reaction>
        <text>uridine(65) in tRNA = pseudouridine(65) in tRNA</text>
        <dbReference type="Rhea" id="RHEA:42536"/>
        <dbReference type="Rhea" id="RHEA-COMP:10103"/>
        <dbReference type="Rhea" id="RHEA-COMP:10104"/>
        <dbReference type="ChEBI" id="CHEBI:65314"/>
        <dbReference type="ChEBI" id="CHEBI:65315"/>
        <dbReference type="EC" id="5.4.99.26"/>
    </reaction>
</comment>
<comment type="similarity">
    <text evidence="2">Belongs to the pseudouridine synthase RluA family.</text>
</comment>
<feature type="chain" id="PRO_0000162720" description="tRNA pseudouridine synthase C">
    <location>
        <begin position="1"/>
        <end position="244"/>
    </location>
</feature>
<feature type="active site" evidence="1">
    <location>
        <position position="54"/>
    </location>
</feature>